<organism>
    <name type="scientific">Bacillus licheniformis (strain ATCC 14580 / DSM 13 / JCM 2505 / CCUG 7422 / NBRC 12200 / NCIMB 9375 / NCTC 10341 / NRRL NRS-1264 / Gibson 46)</name>
    <dbReference type="NCBI Taxonomy" id="279010"/>
    <lineage>
        <taxon>Bacteria</taxon>
        <taxon>Bacillati</taxon>
        <taxon>Bacillota</taxon>
        <taxon>Bacilli</taxon>
        <taxon>Bacillales</taxon>
        <taxon>Bacillaceae</taxon>
        <taxon>Bacillus</taxon>
    </lineage>
</organism>
<protein>
    <recommendedName>
        <fullName evidence="1">Large ribosomal subunit protein bL33C</fullName>
    </recommendedName>
    <alternativeName>
        <fullName evidence="1">50S ribosomal protein L33 3</fullName>
    </alternativeName>
</protein>
<sequence length="49" mass="5874">MRVNITLACTECGERNYISTKNKRNNPDRVEFKKYCPRDKKSTLHRETK</sequence>
<gene>
    <name evidence="1" type="primary">rpmG3</name>
    <name type="synonym">rpmGA</name>
    <name type="ordered locus">BLi02667</name>
    <name type="ordered locus">BL05269</name>
</gene>
<comment type="similarity">
    <text evidence="1">Belongs to the bacterial ribosomal protein bL33 family.</text>
</comment>
<reference key="1">
    <citation type="journal article" date="2004" name="J. Mol. Microbiol. Biotechnol.">
        <title>The complete genome sequence of Bacillus licheniformis DSM13, an organism with great industrial potential.</title>
        <authorList>
            <person name="Veith B."/>
            <person name="Herzberg C."/>
            <person name="Steckel S."/>
            <person name="Feesche J."/>
            <person name="Maurer K.H."/>
            <person name="Ehrenreich P."/>
            <person name="Baeumer S."/>
            <person name="Henne A."/>
            <person name="Liesegang H."/>
            <person name="Merkl R."/>
            <person name="Ehrenreich A."/>
            <person name="Gottschalk G."/>
        </authorList>
    </citation>
    <scope>NUCLEOTIDE SEQUENCE [LARGE SCALE GENOMIC DNA]</scope>
    <source>
        <strain>ATCC 14580 / DSM 13 / JCM 2505 / CCUG 7422 / NBRC 12200 / NCIMB 9375 / NCTC 10341 / NRRL NRS-1264 / Gibson 46</strain>
    </source>
</reference>
<reference key="2">
    <citation type="journal article" date="2004" name="Genome Biol.">
        <title>Complete genome sequence of the industrial bacterium Bacillus licheniformis and comparisons with closely related Bacillus species.</title>
        <authorList>
            <person name="Rey M.W."/>
            <person name="Ramaiya P."/>
            <person name="Nelson B.A."/>
            <person name="Brody-Karpin S.D."/>
            <person name="Zaretsky E.J."/>
            <person name="Tang M."/>
            <person name="Lopez de Leon A."/>
            <person name="Xiang H."/>
            <person name="Gusti V."/>
            <person name="Clausen I.G."/>
            <person name="Olsen P.B."/>
            <person name="Rasmussen M.D."/>
            <person name="Andersen J.T."/>
            <person name="Joergensen P.L."/>
            <person name="Larsen T.S."/>
            <person name="Sorokin A."/>
            <person name="Bolotin A."/>
            <person name="Lapidus A."/>
            <person name="Galleron N."/>
            <person name="Ehrlich S.D."/>
            <person name="Berka R.M."/>
        </authorList>
    </citation>
    <scope>NUCLEOTIDE SEQUENCE [LARGE SCALE GENOMIC DNA]</scope>
    <source>
        <strain>ATCC 14580 / DSM 13 / JCM 2505 / CCUG 7422 / NBRC 12200 / NCIMB 9375 / NCTC 10341 / NRRL NRS-1264 / Gibson 46</strain>
    </source>
</reference>
<keyword id="KW-1185">Reference proteome</keyword>
<keyword id="KW-0687">Ribonucleoprotein</keyword>
<keyword id="KW-0689">Ribosomal protein</keyword>
<feature type="chain" id="PRO_0000356392" description="Large ribosomal subunit protein bL33C">
    <location>
        <begin position="1"/>
        <end position="49"/>
    </location>
</feature>
<feature type="region of interest" description="Disordered" evidence="2">
    <location>
        <begin position="21"/>
        <end position="49"/>
    </location>
</feature>
<feature type="compositionally biased region" description="Basic and acidic residues" evidence="2">
    <location>
        <begin position="25"/>
        <end position="49"/>
    </location>
</feature>
<name>RL333_BACLD</name>
<evidence type="ECO:0000255" key="1">
    <source>
        <dbReference type="HAMAP-Rule" id="MF_00294"/>
    </source>
</evidence>
<evidence type="ECO:0000256" key="2">
    <source>
        <dbReference type="SAM" id="MobiDB-lite"/>
    </source>
</evidence>
<accession>Q65HC5</accession>
<accession>Q62ST0</accession>
<dbReference type="EMBL" id="CP000002">
    <property type="protein sequence ID" value="AAU24179.1"/>
    <property type="molecule type" value="Genomic_DNA"/>
</dbReference>
<dbReference type="EMBL" id="AE017333">
    <property type="protein sequence ID" value="AAU41539.1"/>
    <property type="molecule type" value="Genomic_DNA"/>
</dbReference>
<dbReference type="SMR" id="Q65HC5"/>
<dbReference type="STRING" id="279010.BL05269"/>
<dbReference type="KEGG" id="bld:BLi02667"/>
<dbReference type="KEGG" id="bli:BL05269"/>
<dbReference type="eggNOG" id="COG0267">
    <property type="taxonomic scope" value="Bacteria"/>
</dbReference>
<dbReference type="HOGENOM" id="CLU_190949_0_2_9"/>
<dbReference type="Proteomes" id="UP000000606">
    <property type="component" value="Chromosome"/>
</dbReference>
<dbReference type="GO" id="GO:0005737">
    <property type="term" value="C:cytoplasm"/>
    <property type="evidence" value="ECO:0007669"/>
    <property type="project" value="UniProtKB-ARBA"/>
</dbReference>
<dbReference type="GO" id="GO:1990904">
    <property type="term" value="C:ribonucleoprotein complex"/>
    <property type="evidence" value="ECO:0007669"/>
    <property type="project" value="UniProtKB-KW"/>
</dbReference>
<dbReference type="GO" id="GO:0005840">
    <property type="term" value="C:ribosome"/>
    <property type="evidence" value="ECO:0007669"/>
    <property type="project" value="UniProtKB-KW"/>
</dbReference>
<dbReference type="GO" id="GO:0003735">
    <property type="term" value="F:structural constituent of ribosome"/>
    <property type="evidence" value="ECO:0007669"/>
    <property type="project" value="InterPro"/>
</dbReference>
<dbReference type="GO" id="GO:0006412">
    <property type="term" value="P:translation"/>
    <property type="evidence" value="ECO:0007669"/>
    <property type="project" value="UniProtKB-UniRule"/>
</dbReference>
<dbReference type="Gene3D" id="2.20.28.120">
    <property type="entry name" value="Ribosomal protein L33"/>
    <property type="match status" value="1"/>
</dbReference>
<dbReference type="HAMAP" id="MF_00294">
    <property type="entry name" value="Ribosomal_bL33"/>
    <property type="match status" value="1"/>
</dbReference>
<dbReference type="InterPro" id="IPR001705">
    <property type="entry name" value="Ribosomal_bL33"/>
</dbReference>
<dbReference type="InterPro" id="IPR018264">
    <property type="entry name" value="Ribosomal_bL33_CS"/>
</dbReference>
<dbReference type="InterPro" id="IPR038584">
    <property type="entry name" value="Ribosomal_bL33_sf"/>
</dbReference>
<dbReference type="InterPro" id="IPR011332">
    <property type="entry name" value="Ribosomal_zn-bd"/>
</dbReference>
<dbReference type="NCBIfam" id="NF001764">
    <property type="entry name" value="PRK00504.1"/>
    <property type="match status" value="1"/>
</dbReference>
<dbReference type="NCBIfam" id="NF001860">
    <property type="entry name" value="PRK00595.1"/>
    <property type="match status" value="1"/>
</dbReference>
<dbReference type="NCBIfam" id="TIGR01023">
    <property type="entry name" value="rpmG_bact"/>
    <property type="match status" value="1"/>
</dbReference>
<dbReference type="PANTHER" id="PTHR43168">
    <property type="entry name" value="50S RIBOSOMAL PROTEIN L33, CHLOROPLASTIC"/>
    <property type="match status" value="1"/>
</dbReference>
<dbReference type="PANTHER" id="PTHR43168:SF2">
    <property type="entry name" value="LARGE RIBOSOMAL SUBUNIT PROTEIN BL33C"/>
    <property type="match status" value="1"/>
</dbReference>
<dbReference type="Pfam" id="PF00471">
    <property type="entry name" value="Ribosomal_L33"/>
    <property type="match status" value="1"/>
</dbReference>
<dbReference type="SUPFAM" id="SSF57829">
    <property type="entry name" value="Zn-binding ribosomal proteins"/>
    <property type="match status" value="1"/>
</dbReference>
<dbReference type="PROSITE" id="PS00582">
    <property type="entry name" value="RIBOSOMAL_L33"/>
    <property type="match status" value="1"/>
</dbReference>
<proteinExistence type="inferred from homology"/>